<organism>
    <name type="scientific">Jasminum nudiflorum</name>
    <name type="common">Winter jasmine</name>
    <dbReference type="NCBI Taxonomy" id="126431"/>
    <lineage>
        <taxon>Eukaryota</taxon>
        <taxon>Viridiplantae</taxon>
        <taxon>Streptophyta</taxon>
        <taxon>Embryophyta</taxon>
        <taxon>Tracheophyta</taxon>
        <taxon>Spermatophyta</taxon>
        <taxon>Magnoliopsida</taxon>
        <taxon>eudicotyledons</taxon>
        <taxon>Gunneridae</taxon>
        <taxon>Pentapetalae</taxon>
        <taxon>asterids</taxon>
        <taxon>lamiids</taxon>
        <taxon>Lamiales</taxon>
        <taxon>Oleaceae</taxon>
        <taxon>Jasmineae</taxon>
        <taxon>Jasminum</taxon>
    </lineage>
</organism>
<proteinExistence type="inferred from homology"/>
<gene>
    <name evidence="1" type="primary">atpI</name>
    <name type="ORF">JNC0161</name>
</gene>
<evidence type="ECO:0000255" key="1">
    <source>
        <dbReference type="HAMAP-Rule" id="MF_01393"/>
    </source>
</evidence>
<geneLocation type="chloroplast"/>
<comment type="function">
    <text evidence="1">Key component of the proton channel; it plays a direct role in the translocation of protons across the membrane.</text>
</comment>
<comment type="subunit">
    <text evidence="1">F-type ATPases have 2 components, CF(1) - the catalytic core - and CF(0) - the membrane proton channel. CF(1) has five subunits: alpha(3), beta(3), gamma(1), delta(1), epsilon(1). CF(0) has four main subunits: a, b, b' and c.</text>
</comment>
<comment type="subcellular location">
    <subcellularLocation>
        <location evidence="1">Plastid</location>
        <location evidence="1">Chloroplast thylakoid membrane</location>
        <topology evidence="1">Multi-pass membrane protein</topology>
    </subcellularLocation>
</comment>
<comment type="similarity">
    <text evidence="1">Belongs to the ATPase A chain family.</text>
</comment>
<protein>
    <recommendedName>
        <fullName evidence="1">ATP synthase subunit a, chloroplastic</fullName>
    </recommendedName>
    <alternativeName>
        <fullName evidence="1">ATP synthase F0 sector subunit a</fullName>
    </alternativeName>
    <alternativeName>
        <fullName evidence="1">F-ATPase subunit IV</fullName>
    </alternativeName>
</protein>
<sequence>MNVLSCSINTLKGLYDISGVEVGQHFYWQIGDFQVHGQVLITSWVVIAILLGSATLAVRNPQTIPTGGQNFFEYVLEFIRDMSKTQIGEEYGPWVPFIGTMFLFIFVSNWSGALLPWKIIQLPHGELAAPTNDINTTVALALLTSVAYFYAGLTKRGLSYFGKYIQPTPILLPINILEDFTKPLSLSFRLFGNILADELVVVVLVSLVPSVVPIPVMFLGLFTSGIQALIFATLAAAYIGESMEGHH</sequence>
<feature type="chain" id="PRO_0000362564" description="ATP synthase subunit a, chloroplastic">
    <location>
        <begin position="1"/>
        <end position="247"/>
    </location>
</feature>
<feature type="transmembrane region" description="Helical" evidence="1">
    <location>
        <begin position="38"/>
        <end position="58"/>
    </location>
</feature>
<feature type="transmembrane region" description="Helical" evidence="1">
    <location>
        <begin position="95"/>
        <end position="115"/>
    </location>
</feature>
<feature type="transmembrane region" description="Helical" evidence="1">
    <location>
        <begin position="134"/>
        <end position="154"/>
    </location>
</feature>
<feature type="transmembrane region" description="Helical" evidence="1">
    <location>
        <begin position="199"/>
        <end position="219"/>
    </location>
</feature>
<feature type="transmembrane region" description="Helical" evidence="1">
    <location>
        <begin position="220"/>
        <end position="240"/>
    </location>
</feature>
<name>ATPI_JASNU</name>
<dbReference type="EMBL" id="DQ673255">
    <property type="protein sequence ID" value="ABG74616.1"/>
    <property type="molecule type" value="Genomic_DNA"/>
</dbReference>
<dbReference type="RefSeq" id="YP_778478.1">
    <property type="nucleotide sequence ID" value="NC_008407.1"/>
</dbReference>
<dbReference type="SMR" id="Q06RE3"/>
<dbReference type="GeneID" id="4319740"/>
<dbReference type="GO" id="GO:0009535">
    <property type="term" value="C:chloroplast thylakoid membrane"/>
    <property type="evidence" value="ECO:0007669"/>
    <property type="project" value="UniProtKB-SubCell"/>
</dbReference>
<dbReference type="GO" id="GO:0005886">
    <property type="term" value="C:plasma membrane"/>
    <property type="evidence" value="ECO:0007669"/>
    <property type="project" value="UniProtKB-UniRule"/>
</dbReference>
<dbReference type="GO" id="GO:0045259">
    <property type="term" value="C:proton-transporting ATP synthase complex"/>
    <property type="evidence" value="ECO:0007669"/>
    <property type="project" value="UniProtKB-KW"/>
</dbReference>
<dbReference type="GO" id="GO:0046933">
    <property type="term" value="F:proton-transporting ATP synthase activity, rotational mechanism"/>
    <property type="evidence" value="ECO:0007669"/>
    <property type="project" value="UniProtKB-UniRule"/>
</dbReference>
<dbReference type="CDD" id="cd00310">
    <property type="entry name" value="ATP-synt_Fo_a_6"/>
    <property type="match status" value="1"/>
</dbReference>
<dbReference type="FunFam" id="1.20.120.220:FF:000001">
    <property type="entry name" value="ATP synthase subunit a, chloroplastic"/>
    <property type="match status" value="1"/>
</dbReference>
<dbReference type="Gene3D" id="1.20.120.220">
    <property type="entry name" value="ATP synthase, F0 complex, subunit A"/>
    <property type="match status" value="1"/>
</dbReference>
<dbReference type="HAMAP" id="MF_01393">
    <property type="entry name" value="ATP_synth_a_bact"/>
    <property type="match status" value="1"/>
</dbReference>
<dbReference type="InterPro" id="IPR045082">
    <property type="entry name" value="ATP_syn_F0_a_bact/chloroplast"/>
</dbReference>
<dbReference type="InterPro" id="IPR000568">
    <property type="entry name" value="ATP_synth_F0_asu"/>
</dbReference>
<dbReference type="InterPro" id="IPR023011">
    <property type="entry name" value="ATP_synth_F0_asu_AS"/>
</dbReference>
<dbReference type="InterPro" id="IPR035908">
    <property type="entry name" value="F0_ATP_A_sf"/>
</dbReference>
<dbReference type="NCBIfam" id="TIGR01131">
    <property type="entry name" value="ATP_synt_6_or_A"/>
    <property type="match status" value="1"/>
</dbReference>
<dbReference type="PANTHER" id="PTHR42823">
    <property type="entry name" value="ATP SYNTHASE SUBUNIT A, CHLOROPLASTIC"/>
    <property type="match status" value="1"/>
</dbReference>
<dbReference type="PANTHER" id="PTHR42823:SF3">
    <property type="entry name" value="ATP SYNTHASE SUBUNIT A, CHLOROPLASTIC"/>
    <property type="match status" value="1"/>
</dbReference>
<dbReference type="Pfam" id="PF00119">
    <property type="entry name" value="ATP-synt_A"/>
    <property type="match status" value="1"/>
</dbReference>
<dbReference type="PRINTS" id="PR00123">
    <property type="entry name" value="ATPASEA"/>
</dbReference>
<dbReference type="SUPFAM" id="SSF81336">
    <property type="entry name" value="F1F0 ATP synthase subunit A"/>
    <property type="match status" value="1"/>
</dbReference>
<dbReference type="PROSITE" id="PS00449">
    <property type="entry name" value="ATPASE_A"/>
    <property type="match status" value="1"/>
</dbReference>
<accession>Q06RE3</accession>
<keyword id="KW-0066">ATP synthesis</keyword>
<keyword id="KW-0138">CF(0)</keyword>
<keyword id="KW-0150">Chloroplast</keyword>
<keyword id="KW-0375">Hydrogen ion transport</keyword>
<keyword id="KW-0406">Ion transport</keyword>
<keyword id="KW-0472">Membrane</keyword>
<keyword id="KW-0934">Plastid</keyword>
<keyword id="KW-0793">Thylakoid</keyword>
<keyword id="KW-0812">Transmembrane</keyword>
<keyword id="KW-1133">Transmembrane helix</keyword>
<keyword id="KW-0813">Transport</keyword>
<reference key="1">
    <citation type="journal article" date="2007" name="Mol. Biol. Evol.">
        <title>Gene relocations within chloroplast genomes of Jasminum and Menodora (Oleaceae) are due to multiple, overlapping inversions.</title>
        <authorList>
            <person name="Lee H.-L."/>
            <person name="Jansen R.K."/>
            <person name="Chumley T.W."/>
            <person name="Kim K.-J."/>
        </authorList>
    </citation>
    <scope>NUCLEOTIDE SEQUENCE [LARGE SCALE GENOMIC DNA]</scope>
</reference>